<proteinExistence type="inferred from homology"/>
<evidence type="ECO:0000255" key="1">
    <source>
        <dbReference type="HAMAP-Rule" id="MF_00033"/>
    </source>
</evidence>
<evidence type="ECO:0000305" key="2"/>
<feature type="chain" id="PRO_0000315177" description="UDP-N-acetylglucosamine--N-acetylmuramyl-(pentapeptide) pyrophosphoryl-undecaprenol N-acetylglucosamine transferase">
    <location>
        <begin position="1"/>
        <end position="360"/>
    </location>
</feature>
<feature type="binding site" evidence="1">
    <location>
        <position position="198"/>
    </location>
    <ligand>
        <name>UDP-N-acetyl-alpha-D-glucosamine</name>
        <dbReference type="ChEBI" id="CHEBI:57705"/>
    </ligand>
</feature>
<feature type="binding site" evidence="1">
    <location>
        <position position="289"/>
    </location>
    <ligand>
        <name>UDP-N-acetyl-alpha-D-glucosamine</name>
        <dbReference type="ChEBI" id="CHEBI:57705"/>
    </ligand>
</feature>
<protein>
    <recommendedName>
        <fullName evidence="1">UDP-N-acetylglucosamine--N-acetylmuramyl-(pentapeptide) pyrophosphoryl-undecaprenol N-acetylglucosamine transferase</fullName>
        <ecNumber evidence="1">2.4.1.227</ecNumber>
    </recommendedName>
    <alternativeName>
        <fullName evidence="1">Undecaprenyl-PP-MurNAc-pentapeptide-UDPGlcNAc GlcNAc transferase</fullName>
    </alternativeName>
</protein>
<reference key="1">
    <citation type="journal article" date="2006" name="Proc. Natl. Acad. Sci. U.S.A.">
        <title>Molecular genetic anatomy of inter- and intraserotype variation in the human bacterial pathogen group A Streptococcus.</title>
        <authorList>
            <person name="Beres S.B."/>
            <person name="Richter E.W."/>
            <person name="Nagiec M.J."/>
            <person name="Sumby P."/>
            <person name="Porcella S.F."/>
            <person name="DeLeo F.R."/>
            <person name="Musser J.M."/>
        </authorList>
    </citation>
    <scope>NUCLEOTIDE SEQUENCE [LARGE SCALE GENOMIC DNA]</scope>
    <source>
        <strain>MGAS2096</strain>
    </source>
</reference>
<dbReference type="EC" id="2.4.1.227" evidence="1"/>
<dbReference type="EMBL" id="CP000261">
    <property type="protein sequence ID" value="ABF36323.1"/>
    <property type="status" value="ALT_INIT"/>
    <property type="molecule type" value="Genomic_DNA"/>
</dbReference>
<dbReference type="SMR" id="Q1JAT5"/>
<dbReference type="CAZy" id="GT28">
    <property type="family name" value="Glycosyltransferase Family 28"/>
</dbReference>
<dbReference type="KEGG" id="spj:MGAS2096_Spy1271"/>
<dbReference type="HOGENOM" id="CLU_037404_0_0_9"/>
<dbReference type="UniPathway" id="UPA00219"/>
<dbReference type="GO" id="GO:0005886">
    <property type="term" value="C:plasma membrane"/>
    <property type="evidence" value="ECO:0007669"/>
    <property type="project" value="UniProtKB-SubCell"/>
</dbReference>
<dbReference type="GO" id="GO:0050511">
    <property type="term" value="F:undecaprenyldiphospho-muramoylpentapeptide beta-N-acetylglucosaminyltransferase activity"/>
    <property type="evidence" value="ECO:0007669"/>
    <property type="project" value="UniProtKB-UniRule"/>
</dbReference>
<dbReference type="GO" id="GO:0005975">
    <property type="term" value="P:carbohydrate metabolic process"/>
    <property type="evidence" value="ECO:0007669"/>
    <property type="project" value="InterPro"/>
</dbReference>
<dbReference type="GO" id="GO:0051301">
    <property type="term" value="P:cell division"/>
    <property type="evidence" value="ECO:0007669"/>
    <property type="project" value="UniProtKB-KW"/>
</dbReference>
<dbReference type="GO" id="GO:0071555">
    <property type="term" value="P:cell wall organization"/>
    <property type="evidence" value="ECO:0007669"/>
    <property type="project" value="UniProtKB-KW"/>
</dbReference>
<dbReference type="GO" id="GO:0030259">
    <property type="term" value="P:lipid glycosylation"/>
    <property type="evidence" value="ECO:0007669"/>
    <property type="project" value="UniProtKB-UniRule"/>
</dbReference>
<dbReference type="GO" id="GO:0009252">
    <property type="term" value="P:peptidoglycan biosynthetic process"/>
    <property type="evidence" value="ECO:0007669"/>
    <property type="project" value="UniProtKB-UniRule"/>
</dbReference>
<dbReference type="GO" id="GO:0008360">
    <property type="term" value="P:regulation of cell shape"/>
    <property type="evidence" value="ECO:0007669"/>
    <property type="project" value="UniProtKB-KW"/>
</dbReference>
<dbReference type="CDD" id="cd03785">
    <property type="entry name" value="GT28_MurG"/>
    <property type="match status" value="1"/>
</dbReference>
<dbReference type="Gene3D" id="3.40.50.2000">
    <property type="entry name" value="Glycogen Phosphorylase B"/>
    <property type="match status" value="2"/>
</dbReference>
<dbReference type="HAMAP" id="MF_00033">
    <property type="entry name" value="MurG"/>
    <property type="match status" value="1"/>
</dbReference>
<dbReference type="InterPro" id="IPR006009">
    <property type="entry name" value="GlcNAc_MurG"/>
</dbReference>
<dbReference type="InterPro" id="IPR007235">
    <property type="entry name" value="Glyco_trans_28_C"/>
</dbReference>
<dbReference type="InterPro" id="IPR004276">
    <property type="entry name" value="GlycoTrans_28_N"/>
</dbReference>
<dbReference type="PANTHER" id="PTHR21015:SF27">
    <property type="entry name" value="UDP-N-ACETYLGLUCOSAMINE--N-ACETYLMURAMYL-(PENTAPEPTIDE) PYROPHOSPHORYL-UNDECAPRENOL N-ACETYLGLUCOSAMINE TRANSFERASE"/>
    <property type="match status" value="1"/>
</dbReference>
<dbReference type="PANTHER" id="PTHR21015">
    <property type="entry name" value="UDP-N-ACETYLGLUCOSAMINE--N-ACETYLMURAMYL-(PENTAPEPTIDE) PYROPHOSPHORYL-UNDECAPRENOL N-ACETYLGLUCOSAMINE TRANSFERASE 1"/>
    <property type="match status" value="1"/>
</dbReference>
<dbReference type="Pfam" id="PF04101">
    <property type="entry name" value="Glyco_tran_28_C"/>
    <property type="match status" value="1"/>
</dbReference>
<dbReference type="Pfam" id="PF03033">
    <property type="entry name" value="Glyco_transf_28"/>
    <property type="match status" value="1"/>
</dbReference>
<dbReference type="SUPFAM" id="SSF53756">
    <property type="entry name" value="UDP-Glycosyltransferase/glycogen phosphorylase"/>
    <property type="match status" value="1"/>
</dbReference>
<sequence>MPKKILFTGGGTVGHVTLNLILIPKFIKDGWEVHYIGDKNGIEHTEIEKSGLDVTFHAIATGKLRRYFSWQNLADVFKVALGLLQSLFIIAKLRPQALFSKGGFVSVPPVVAAKLLGKPVFIHESDRSMGLANKIAYKFATTMYTTFEQEDQLSKVKHLGAVTKVFKDANQMPESTQLEAVKEYFSRDLKTLLFIGGSAGAHVFNQFISDHPELKQRYNIINITGDPHLNELSSHLYRVDYVTDLYQPLMAMADLVVTRGGSNTLFELLAMAKLHLIVPLGKEASRGDQLENATYFEKRGYAKQLQEPDLTLHNFDQAMADLFEHQADYEATMLATKEIQSPDFFYDLLRADISSAIKEK</sequence>
<accession>Q1JAT5</accession>
<comment type="function">
    <text evidence="1">Cell wall formation. Catalyzes the transfer of a GlcNAc subunit on undecaprenyl-pyrophosphoryl-MurNAc-pentapeptide (lipid intermediate I) to form undecaprenyl-pyrophosphoryl-MurNAc-(pentapeptide)GlcNAc (lipid intermediate II).</text>
</comment>
<comment type="catalytic activity">
    <reaction evidence="1">
        <text>Mur2Ac(oyl-L-Ala-gamma-D-Glu-L-Lys-D-Ala-D-Ala)-di-trans,octa-cis-undecaprenyl diphosphate + UDP-N-acetyl-alpha-D-glucosamine = beta-D-GlcNAc-(1-&gt;4)-Mur2Ac(oyl-L-Ala-gamma-D-Glu-L-Lys-D-Ala-D-Ala)-di-trans,octa-cis-undecaprenyl diphosphate + UDP + H(+)</text>
        <dbReference type="Rhea" id="RHEA:23192"/>
        <dbReference type="ChEBI" id="CHEBI:15378"/>
        <dbReference type="ChEBI" id="CHEBI:57705"/>
        <dbReference type="ChEBI" id="CHEBI:58223"/>
        <dbReference type="ChEBI" id="CHEBI:60032"/>
        <dbReference type="ChEBI" id="CHEBI:60033"/>
        <dbReference type="EC" id="2.4.1.227"/>
    </reaction>
</comment>
<comment type="pathway">
    <text evidence="1">Cell wall biogenesis; peptidoglycan biosynthesis.</text>
</comment>
<comment type="subcellular location">
    <subcellularLocation>
        <location evidence="1">Cell membrane</location>
        <topology evidence="1">Peripheral membrane protein</topology>
        <orientation evidence="1">Cytoplasmic side</orientation>
    </subcellularLocation>
</comment>
<comment type="similarity">
    <text evidence="1">Belongs to the glycosyltransferase 28 family. MurG subfamily.</text>
</comment>
<comment type="sequence caution" evidence="2">
    <conflict type="erroneous initiation">
        <sequence resource="EMBL-CDS" id="ABF36323"/>
    </conflict>
</comment>
<gene>
    <name evidence="1" type="primary">murG</name>
    <name type="ordered locus">MGAS2096_Spy1271</name>
</gene>
<name>MURG_STRPB</name>
<organism>
    <name type="scientific">Streptococcus pyogenes serotype M12 (strain MGAS2096)</name>
    <dbReference type="NCBI Taxonomy" id="370553"/>
    <lineage>
        <taxon>Bacteria</taxon>
        <taxon>Bacillati</taxon>
        <taxon>Bacillota</taxon>
        <taxon>Bacilli</taxon>
        <taxon>Lactobacillales</taxon>
        <taxon>Streptococcaceae</taxon>
        <taxon>Streptococcus</taxon>
    </lineage>
</organism>
<keyword id="KW-0131">Cell cycle</keyword>
<keyword id="KW-0132">Cell division</keyword>
<keyword id="KW-1003">Cell membrane</keyword>
<keyword id="KW-0133">Cell shape</keyword>
<keyword id="KW-0961">Cell wall biogenesis/degradation</keyword>
<keyword id="KW-0328">Glycosyltransferase</keyword>
<keyword id="KW-0472">Membrane</keyword>
<keyword id="KW-0573">Peptidoglycan synthesis</keyword>
<keyword id="KW-0808">Transferase</keyword>